<name>SDC1_BOVIN</name>
<accession>Q08DZ5</accession>
<sequence length="311" mass="32316">MRRAALWLWLCALALRLQPALLHSVAVNMPPEDQDGSGDDSDNFSGSGAGALPDITSSHTPSTWKDLGPVTTTATAPEPTSPDAIAASTTILPTGEQPEGGRAVLLAEVEPGLTAQKEATHPPSETTLHPTTHSVSTARATMAPGPATSHPHRDVQPDHHETSAPTGRGRMEPHRPHVEEGGPPATEKAAEEDPSTQIPVGEGSGEQDFTFDLSGENAAGAAGEPGSRNGAPEDPEATGATGASQGLLDRKEVLGGVIAGGLVGLIFAVCLVGFMLYRMKKKDEGSYSLEEPKQANGGAYQKPTKQEEFYA</sequence>
<protein>
    <recommendedName>
        <fullName evidence="3">Syndecan-1</fullName>
        <shortName evidence="3">SYND1</shortName>
    </recommendedName>
    <cdAntigenName>CD138</cdAntigenName>
</protein>
<keyword id="KW-0325">Glycoprotein</keyword>
<keyword id="KW-0357">Heparan sulfate</keyword>
<keyword id="KW-0472">Membrane</keyword>
<keyword id="KW-0597">Phosphoprotein</keyword>
<keyword id="KW-0654">Proteoglycan</keyword>
<keyword id="KW-1185">Reference proteome</keyword>
<keyword id="KW-0964">Secreted</keyword>
<keyword id="KW-0732">Signal</keyword>
<keyword id="KW-0812">Transmembrane</keyword>
<keyword id="KW-1133">Transmembrane helix</keyword>
<comment type="function">
    <text evidence="2 3">Cell surface proteoglycan that contains both heparan sulfate and chondroitin sulfate and that links the cytoskeleton to the interstitial matrix (By similarity). Regulates exosome biogenesis in concert with SDCBP and PDCD6IP (By similarity). Able to induce its own expression in dental mesenchymal cells and also in the neighboring dental epithelial cells via an MSX1-mediated pathway (By similarity).</text>
</comment>
<comment type="subunit">
    <text evidence="2 4">Interacts with CDCP1. Interacts (via C-terminus) with TIAM1 (via PDZ domain) (By similarity). Interacts with MDK (By similarity).</text>
</comment>
<comment type="subcellular location">
    <subcellularLocation>
        <location evidence="5">Membrane</location>
        <topology evidence="5">Single-pass type I membrane protein</topology>
    </subcellularLocation>
    <subcellularLocation>
        <location evidence="2">Secreted</location>
    </subcellularLocation>
    <subcellularLocation>
        <location evidence="2">Secreted</location>
        <location evidence="2">Extracellular exosome</location>
    </subcellularLocation>
    <text evidence="2">Shedding of the ectodomain produces a soluble form.</text>
</comment>
<comment type="PTM">
    <text evidence="2">Shedding is enhanced by a number of factors such as heparanase, thrombin or EGF. Also by stress and wound healing. PMA-mediated shedding is inhibited by TIMP3 (By similarity).</text>
</comment>
<comment type="similarity">
    <text evidence="7">Belongs to the syndecan proteoglycan family.</text>
</comment>
<proteinExistence type="evidence at transcript level"/>
<gene>
    <name evidence="3" type="primary">SDC1</name>
</gene>
<reference key="1">
    <citation type="submission" date="2006-09" db="EMBL/GenBank/DDBJ databases">
        <authorList>
            <consortium name="NIH - Mammalian Gene Collection (MGC) project"/>
        </authorList>
    </citation>
    <scope>NUCLEOTIDE SEQUENCE [LARGE SCALE MRNA]</scope>
    <source>
        <strain>Hereford</strain>
        <tissue>Fetal skin</tissue>
    </source>
</reference>
<feature type="signal peptide" evidence="5">
    <location>
        <begin position="1"/>
        <end position="22"/>
    </location>
</feature>
<feature type="chain" id="PRO_0000290107" description="Syndecan-1">
    <location>
        <begin position="23"/>
        <end position="311"/>
    </location>
</feature>
<feature type="topological domain" description="Extracellular" evidence="5">
    <location>
        <begin position="23"/>
        <end position="255"/>
    </location>
</feature>
<feature type="transmembrane region" description="Helical" evidence="5">
    <location>
        <begin position="256"/>
        <end position="276"/>
    </location>
</feature>
<feature type="topological domain" description="Cytoplasmic" evidence="5">
    <location>
        <begin position="277"/>
        <end position="311"/>
    </location>
</feature>
<feature type="region of interest" description="Disordered" evidence="6">
    <location>
        <begin position="31"/>
        <end position="85"/>
    </location>
</feature>
<feature type="region of interest" description="Disordered" evidence="6">
    <location>
        <begin position="141"/>
        <end position="244"/>
    </location>
</feature>
<feature type="region of interest" description="Disordered" evidence="6">
    <location>
        <begin position="285"/>
        <end position="311"/>
    </location>
</feature>
<feature type="compositionally biased region" description="Acidic residues" evidence="6">
    <location>
        <begin position="32"/>
        <end position="42"/>
    </location>
</feature>
<feature type="compositionally biased region" description="Low complexity" evidence="6">
    <location>
        <begin position="71"/>
        <end position="84"/>
    </location>
</feature>
<feature type="compositionally biased region" description="Basic and acidic residues" evidence="6">
    <location>
        <begin position="151"/>
        <end position="162"/>
    </location>
</feature>
<feature type="compositionally biased region" description="Basic and acidic residues" evidence="6">
    <location>
        <begin position="169"/>
        <end position="180"/>
    </location>
</feature>
<feature type="compositionally biased region" description="Low complexity" evidence="6">
    <location>
        <begin position="215"/>
        <end position="226"/>
    </location>
</feature>
<feature type="site" description="Cleavage of ectodomain" evidence="5">
    <location>
        <begin position="251"/>
        <end position="252"/>
    </location>
</feature>
<feature type="modified residue" description="Phosphoserine" evidence="2">
    <location>
        <position position="286"/>
    </location>
</feature>
<feature type="glycosylation site" description="O-linked (Xyl...) (chondroitin sulfate) serine" evidence="3">
    <location>
        <position position="37"/>
    </location>
</feature>
<feature type="glycosylation site" description="N-linked (GlcNAc...) asparagine" evidence="5">
    <location>
        <position position="43"/>
    </location>
</feature>
<feature type="glycosylation site" description="O-linked (Xyl...) (heparan sulfate) serine" evidence="1">
    <location>
        <position position="45"/>
    </location>
</feature>
<feature type="glycosylation site" description="O-linked (Xyl...) (heparan sulfate) serine" evidence="1">
    <location>
        <position position="47"/>
    </location>
</feature>
<feature type="glycosylation site" description="O-linked (Xyl...) (chondroitin sulfate) serine" evidence="2">
    <location>
        <position position="204"/>
    </location>
</feature>
<feature type="glycosylation site" description="O-linked (Xyl...) (chondroitin sulfate) serine" evidence="3">
    <location>
        <position position="214"/>
    </location>
</feature>
<dbReference type="EMBL" id="BC123495">
    <property type="protein sequence ID" value="AAI23496.1"/>
    <property type="molecule type" value="mRNA"/>
</dbReference>
<dbReference type="RefSeq" id="NP_001069392.1">
    <property type="nucleotide sequence ID" value="NM_001075924.1"/>
</dbReference>
<dbReference type="FunCoup" id="Q08DZ5">
    <property type="interactions" value="142"/>
</dbReference>
<dbReference type="STRING" id="9913.ENSBTAP00000072853"/>
<dbReference type="GlyCosmos" id="Q08DZ5">
    <property type="glycosylation" value="6 sites, No reported glycans"/>
</dbReference>
<dbReference type="GlyGen" id="Q08DZ5">
    <property type="glycosylation" value="6 sites"/>
</dbReference>
<dbReference type="PaxDb" id="9913-ENSBTAP00000014810"/>
<dbReference type="PeptideAtlas" id="Q08DZ5"/>
<dbReference type="GeneID" id="529759"/>
<dbReference type="KEGG" id="bta:529759"/>
<dbReference type="CTD" id="6382"/>
<dbReference type="VEuPathDB" id="HostDB:ENSBTAG00000011154"/>
<dbReference type="eggNOG" id="ENOG502RZWT">
    <property type="taxonomic scope" value="Eukaryota"/>
</dbReference>
<dbReference type="HOGENOM" id="CLU_887201_0_0_1"/>
<dbReference type="InParanoid" id="Q08DZ5"/>
<dbReference type="OMA" id="VFCFQAV"/>
<dbReference type="OrthoDB" id="10044468at2759"/>
<dbReference type="TreeFam" id="TF320463"/>
<dbReference type="Reactome" id="R-BTA-1971475">
    <property type="pathway name" value="A tetrasaccharide linker sequence is required for GAG synthesis"/>
</dbReference>
<dbReference type="Reactome" id="R-BTA-2022928">
    <property type="pathway name" value="HS-GAG biosynthesis"/>
</dbReference>
<dbReference type="Reactome" id="R-BTA-2024096">
    <property type="pathway name" value="HS-GAG degradation"/>
</dbReference>
<dbReference type="Reactome" id="R-BTA-202733">
    <property type="pathway name" value="Cell surface interactions at the vascular wall"/>
</dbReference>
<dbReference type="Reactome" id="R-BTA-3000170">
    <property type="pathway name" value="Syndecan interactions"/>
</dbReference>
<dbReference type="Reactome" id="R-BTA-449836">
    <property type="pathway name" value="Other interleukin signaling"/>
</dbReference>
<dbReference type="Reactome" id="R-BTA-975634">
    <property type="pathway name" value="Retinoid metabolism and transport"/>
</dbReference>
<dbReference type="Proteomes" id="UP000009136">
    <property type="component" value="Chromosome 11"/>
</dbReference>
<dbReference type="Bgee" id="ENSBTAG00000011154">
    <property type="expression patterns" value="Expressed in esophagus and 99 other cell types or tissues"/>
</dbReference>
<dbReference type="GO" id="GO:0009986">
    <property type="term" value="C:cell surface"/>
    <property type="evidence" value="ECO:0000318"/>
    <property type="project" value="GO_Central"/>
</dbReference>
<dbReference type="GO" id="GO:0005576">
    <property type="term" value="C:extracellular region"/>
    <property type="evidence" value="ECO:0007669"/>
    <property type="project" value="UniProtKB-SubCell"/>
</dbReference>
<dbReference type="GO" id="GO:0016020">
    <property type="term" value="C:membrane"/>
    <property type="evidence" value="ECO:0007669"/>
    <property type="project" value="UniProtKB-SubCell"/>
</dbReference>
<dbReference type="GO" id="GO:0016477">
    <property type="term" value="P:cell migration"/>
    <property type="evidence" value="ECO:0000318"/>
    <property type="project" value="GO_Central"/>
</dbReference>
<dbReference type="InterPro" id="IPR003585">
    <property type="entry name" value="Neurexin-like"/>
</dbReference>
<dbReference type="InterPro" id="IPR001050">
    <property type="entry name" value="Syndecan"/>
</dbReference>
<dbReference type="InterPro" id="IPR027789">
    <property type="entry name" value="Syndecan/Neurexin_dom"/>
</dbReference>
<dbReference type="InterPro" id="IPR030479">
    <property type="entry name" value="Syndecan_CS"/>
</dbReference>
<dbReference type="PANTHER" id="PTHR10915">
    <property type="entry name" value="SYNDECAN"/>
    <property type="match status" value="1"/>
</dbReference>
<dbReference type="PANTHER" id="PTHR10915:SF5">
    <property type="entry name" value="SYNDECAN-1"/>
    <property type="match status" value="1"/>
</dbReference>
<dbReference type="Pfam" id="PF01034">
    <property type="entry name" value="Syndecan"/>
    <property type="match status" value="1"/>
</dbReference>
<dbReference type="SMART" id="SM00294">
    <property type="entry name" value="4.1m"/>
    <property type="match status" value="1"/>
</dbReference>
<dbReference type="PROSITE" id="PS00964">
    <property type="entry name" value="SYNDECAN"/>
    <property type="match status" value="1"/>
</dbReference>
<evidence type="ECO:0000250" key="1"/>
<evidence type="ECO:0000250" key="2">
    <source>
        <dbReference type="UniProtKB" id="P18827"/>
    </source>
</evidence>
<evidence type="ECO:0000250" key="3">
    <source>
        <dbReference type="UniProtKB" id="P18828"/>
    </source>
</evidence>
<evidence type="ECO:0000250" key="4">
    <source>
        <dbReference type="UniProtKB" id="P26260"/>
    </source>
</evidence>
<evidence type="ECO:0000255" key="5"/>
<evidence type="ECO:0000256" key="6">
    <source>
        <dbReference type="SAM" id="MobiDB-lite"/>
    </source>
</evidence>
<evidence type="ECO:0000305" key="7"/>
<organism>
    <name type="scientific">Bos taurus</name>
    <name type="common">Bovine</name>
    <dbReference type="NCBI Taxonomy" id="9913"/>
    <lineage>
        <taxon>Eukaryota</taxon>
        <taxon>Metazoa</taxon>
        <taxon>Chordata</taxon>
        <taxon>Craniata</taxon>
        <taxon>Vertebrata</taxon>
        <taxon>Euteleostomi</taxon>
        <taxon>Mammalia</taxon>
        <taxon>Eutheria</taxon>
        <taxon>Laurasiatheria</taxon>
        <taxon>Artiodactyla</taxon>
        <taxon>Ruminantia</taxon>
        <taxon>Pecora</taxon>
        <taxon>Bovidae</taxon>
        <taxon>Bovinae</taxon>
        <taxon>Bos</taxon>
    </lineage>
</organism>